<dbReference type="EMBL" id="AK052482">
    <property type="protein sequence ID" value="BAC35011.1"/>
    <property type="molecule type" value="mRNA"/>
</dbReference>
<dbReference type="EMBL" id="AK144138">
    <property type="protein sequence ID" value="BAE25723.1"/>
    <property type="molecule type" value="mRNA"/>
</dbReference>
<dbReference type="CCDS" id="CCDS36575.1"/>
<dbReference type="RefSeq" id="NP_666151.3">
    <property type="nucleotide sequence ID" value="NM_146039.3"/>
</dbReference>
<dbReference type="SMR" id="Q8C761"/>
<dbReference type="BioGRID" id="229980">
    <property type="interactions" value="1"/>
</dbReference>
<dbReference type="FunCoup" id="Q8C761">
    <property type="interactions" value="953"/>
</dbReference>
<dbReference type="STRING" id="10090.ENSMUSP00000047334"/>
<dbReference type="iPTMnet" id="Q8C761"/>
<dbReference type="PhosphoSitePlus" id="Q8C761"/>
<dbReference type="SwissPalm" id="Q8C761"/>
<dbReference type="jPOST" id="Q8C761"/>
<dbReference type="PaxDb" id="10090-ENSMUSP00000047334"/>
<dbReference type="PeptideAtlas" id="Q8C761"/>
<dbReference type="ProteomicsDB" id="299745"/>
<dbReference type="Pumba" id="Q8C761"/>
<dbReference type="Antibodypedia" id="10739">
    <property type="antibodies" value="39 antibodies from 10 providers"/>
</dbReference>
<dbReference type="DNASU" id="217935"/>
<dbReference type="Ensembl" id="ENSMUST00000039349.8">
    <property type="protein sequence ID" value="ENSMUSP00000047334.7"/>
    <property type="gene ID" value="ENSMUSG00000042050.9"/>
</dbReference>
<dbReference type="GeneID" id="217935"/>
<dbReference type="KEGG" id="mmu:217935"/>
<dbReference type="UCSC" id="uc007phj.1">
    <property type="organism name" value="mouse"/>
</dbReference>
<dbReference type="AGR" id="MGI:2445085"/>
<dbReference type="CTD" id="55112"/>
<dbReference type="MGI" id="MGI:2445085">
    <property type="gene designation" value="Dync2i1"/>
</dbReference>
<dbReference type="VEuPathDB" id="HostDB:ENSMUSG00000042050"/>
<dbReference type="eggNOG" id="KOG1587">
    <property type="taxonomic scope" value="Eukaryota"/>
</dbReference>
<dbReference type="GeneTree" id="ENSGT00390000013743"/>
<dbReference type="HOGENOM" id="CLU_010610_0_0_1"/>
<dbReference type="InParanoid" id="Q8C761"/>
<dbReference type="OMA" id="ILNMWVV"/>
<dbReference type="PhylomeDB" id="Q8C761"/>
<dbReference type="TreeFam" id="TF329081"/>
<dbReference type="Reactome" id="R-MMU-5620924">
    <property type="pathway name" value="Intraflagellar transport"/>
</dbReference>
<dbReference type="BioGRID-ORCS" id="217935">
    <property type="hits" value="5 hits in 76 CRISPR screens"/>
</dbReference>
<dbReference type="ChiTaRS" id="Wdr60">
    <property type="organism name" value="mouse"/>
</dbReference>
<dbReference type="PRO" id="PR:Q8C761"/>
<dbReference type="Proteomes" id="UP000000589">
    <property type="component" value="Chromosome 12"/>
</dbReference>
<dbReference type="RNAct" id="Q8C761">
    <property type="molecule type" value="protein"/>
</dbReference>
<dbReference type="Bgee" id="ENSMUSG00000042050">
    <property type="expression patterns" value="Expressed in retinal neural layer and 172 other cell types or tissues"/>
</dbReference>
<dbReference type="ExpressionAtlas" id="Q8C761">
    <property type="expression patterns" value="baseline and differential"/>
</dbReference>
<dbReference type="GO" id="GO:0005813">
    <property type="term" value="C:centrosome"/>
    <property type="evidence" value="ECO:0000250"/>
    <property type="project" value="UniProtKB"/>
</dbReference>
<dbReference type="GO" id="GO:0036064">
    <property type="term" value="C:ciliary basal body"/>
    <property type="evidence" value="ECO:0007669"/>
    <property type="project" value="Ensembl"/>
</dbReference>
<dbReference type="GO" id="GO:0097546">
    <property type="term" value="C:ciliary base"/>
    <property type="evidence" value="ECO:0007669"/>
    <property type="project" value="Ensembl"/>
</dbReference>
<dbReference type="GO" id="GO:0005929">
    <property type="term" value="C:cilium"/>
    <property type="evidence" value="ECO:0000314"/>
    <property type="project" value="MGI"/>
</dbReference>
<dbReference type="GO" id="GO:0005868">
    <property type="term" value="C:cytoplasmic dynein complex"/>
    <property type="evidence" value="ECO:0000250"/>
    <property type="project" value="UniProtKB"/>
</dbReference>
<dbReference type="GO" id="GO:0005829">
    <property type="term" value="C:cytosol"/>
    <property type="evidence" value="ECO:0007669"/>
    <property type="project" value="Ensembl"/>
</dbReference>
<dbReference type="GO" id="GO:0031021">
    <property type="term" value="C:interphase microtubule organizing center"/>
    <property type="evidence" value="ECO:0007669"/>
    <property type="project" value="Ensembl"/>
</dbReference>
<dbReference type="GO" id="GO:0000242">
    <property type="term" value="C:pericentriolar material"/>
    <property type="evidence" value="ECO:0007669"/>
    <property type="project" value="Ensembl"/>
</dbReference>
<dbReference type="GO" id="GO:0000922">
    <property type="term" value="C:spindle pole"/>
    <property type="evidence" value="ECO:0007669"/>
    <property type="project" value="Ensembl"/>
</dbReference>
<dbReference type="GO" id="GO:0045504">
    <property type="term" value="F:dynein heavy chain binding"/>
    <property type="evidence" value="ECO:0007669"/>
    <property type="project" value="InterPro"/>
</dbReference>
<dbReference type="GO" id="GO:0045503">
    <property type="term" value="F:dynein light chain binding"/>
    <property type="evidence" value="ECO:0007669"/>
    <property type="project" value="Ensembl"/>
</dbReference>
<dbReference type="GO" id="GO:0060271">
    <property type="term" value="P:cilium assembly"/>
    <property type="evidence" value="ECO:0007669"/>
    <property type="project" value="Ensembl"/>
</dbReference>
<dbReference type="GO" id="GO:0048704">
    <property type="term" value="P:embryonic skeletal system morphogenesis"/>
    <property type="evidence" value="ECO:0007669"/>
    <property type="project" value="Ensembl"/>
</dbReference>
<dbReference type="GO" id="GO:0035721">
    <property type="term" value="P:intraciliary retrograde transport"/>
    <property type="evidence" value="ECO:0000250"/>
    <property type="project" value="UniProtKB"/>
</dbReference>
<dbReference type="FunFam" id="2.130.10.10:FF:000979">
    <property type="entry name" value="WD repeat domain 60"/>
    <property type="match status" value="1"/>
</dbReference>
<dbReference type="FunFam" id="2.130.10.10:FF:001197">
    <property type="entry name" value="WD repeat domain 60"/>
    <property type="match status" value="1"/>
</dbReference>
<dbReference type="Gene3D" id="2.130.10.10">
    <property type="entry name" value="YVTN repeat-like/Quinoprotein amine dehydrogenase"/>
    <property type="match status" value="2"/>
</dbReference>
<dbReference type="InterPro" id="IPR042505">
    <property type="entry name" value="DYNC2I1"/>
</dbReference>
<dbReference type="InterPro" id="IPR015943">
    <property type="entry name" value="WD40/YVTN_repeat-like_dom_sf"/>
</dbReference>
<dbReference type="InterPro" id="IPR036322">
    <property type="entry name" value="WD40_repeat_dom_sf"/>
</dbReference>
<dbReference type="InterPro" id="IPR001680">
    <property type="entry name" value="WD40_rpt"/>
</dbReference>
<dbReference type="PANTHER" id="PTHR16022:SF0">
    <property type="entry name" value="CYTOPLASMIC DYNEIN 2 INTERMEDIATE CHAIN 1"/>
    <property type="match status" value="1"/>
</dbReference>
<dbReference type="PANTHER" id="PTHR16022">
    <property type="entry name" value="WD REPEAT DOMAIN 60"/>
    <property type="match status" value="1"/>
</dbReference>
<dbReference type="Pfam" id="PF00400">
    <property type="entry name" value="WD40"/>
    <property type="match status" value="1"/>
</dbReference>
<dbReference type="SMART" id="SM00320">
    <property type="entry name" value="WD40"/>
    <property type="match status" value="3"/>
</dbReference>
<dbReference type="SUPFAM" id="SSF50978">
    <property type="entry name" value="WD40 repeat-like"/>
    <property type="match status" value="1"/>
</dbReference>
<comment type="function">
    <text evidence="1">Acts as one of several non-catalytic accessory components of the cytoplasmic dynein 2 complex (dynein-2 complex), a motor protein complex that drives the movement of cargos along microtubules within cilia and flagella in concert with the intraflagellar transport (IFT) system. DYNC2I1 plays a major role in retrograde ciliary protein trafficking in cilia and flagella. Also requires to maintain a functional transition zone.</text>
</comment>
<comment type="subunit">
    <text evidence="1">Intermediate chain of the cytoplasmic dynein complex 2, a multisubunit complex, composed at least of eleven different proteins. The cytoplasmic dynein 2 complex consists of two catalytic heavy chains (HCs) and a number of non-catalytic subunits presented by intermediate chains (ICs), light intermediate chains (LICs) and light chains (LCs). Among them, a heavy chain (DYNC2H1), two intermediate chains (DYNC2I2 and DYNC2I1), a light intermediate chain (DYNC2LI1), and a light chain (DYNLT2B) are unique to the cytoplasmic dynein complex 2, but a subset of the light chains are also shared by dynein-1 and dynein-2 complexes. Interacts with DYNC2I2; their C-terminal domains each bind a copy of the heavy chain, and their extended N-terminal regions are held together by an array of light chain dimers. Interacts with DYNLT2B. Interacts (via the N-terminal half) with DYNLT2B-DYNLT1 dimer or with DYNLT2B-DYNLT3 dimer; this interaction is crucial for retrograde trafficking of ciliary proteins.</text>
</comment>
<comment type="subcellular location">
    <subcellularLocation>
        <location evidence="1">Cell projection</location>
        <location evidence="1">Cilium</location>
    </subcellularLocation>
    <subcellularLocation>
        <location evidence="1">Cytoplasm</location>
        <location evidence="1">Cytoskeleton</location>
        <location evidence="1">Microtubule organizing center</location>
        <location evidence="1">Centrosome</location>
    </subcellularLocation>
    <text evidence="1">Located at the base of the primary cilium in serum-starved fibroblasts.</text>
</comment>
<comment type="similarity">
    <text evidence="4">Belongs to the dynein light intermediate chain family.</text>
</comment>
<evidence type="ECO:0000250" key="1">
    <source>
        <dbReference type="UniProtKB" id="Q8WVS4"/>
    </source>
</evidence>
<evidence type="ECO:0000255" key="2"/>
<evidence type="ECO:0000256" key="3">
    <source>
        <dbReference type="SAM" id="MobiDB-lite"/>
    </source>
</evidence>
<evidence type="ECO:0000305" key="4"/>
<organism>
    <name type="scientific">Mus musculus</name>
    <name type="common">Mouse</name>
    <dbReference type="NCBI Taxonomy" id="10090"/>
    <lineage>
        <taxon>Eukaryota</taxon>
        <taxon>Metazoa</taxon>
        <taxon>Chordata</taxon>
        <taxon>Craniata</taxon>
        <taxon>Vertebrata</taxon>
        <taxon>Euteleostomi</taxon>
        <taxon>Mammalia</taxon>
        <taxon>Eutheria</taxon>
        <taxon>Euarchontoglires</taxon>
        <taxon>Glires</taxon>
        <taxon>Rodentia</taxon>
        <taxon>Myomorpha</taxon>
        <taxon>Muroidea</taxon>
        <taxon>Muridae</taxon>
        <taxon>Murinae</taxon>
        <taxon>Mus</taxon>
        <taxon>Mus</taxon>
    </lineage>
</organism>
<feature type="chain" id="PRO_0000242143" description="Cytoplasmic dynein 2 intermediate chain 1">
    <location>
        <begin position="1"/>
        <end position="999"/>
    </location>
</feature>
<feature type="repeat" description="WD 1" evidence="2">
    <location>
        <begin position="637"/>
        <end position="677"/>
    </location>
</feature>
<feature type="repeat" description="WD 2" evidence="2">
    <location>
        <begin position="718"/>
        <end position="764"/>
    </location>
</feature>
<feature type="repeat" description="WD 3" evidence="2">
    <location>
        <begin position="850"/>
        <end position="890"/>
    </location>
</feature>
<feature type="repeat" description="WD 4" evidence="2">
    <location>
        <begin position="895"/>
        <end position="935"/>
    </location>
</feature>
<feature type="region of interest" description="Disordered" evidence="3">
    <location>
        <begin position="1"/>
        <end position="350"/>
    </location>
</feature>
<feature type="region of interest" description="Binding to the DYNLT2B-DYNLT1/DYNLT3 dimer" evidence="1">
    <location>
        <begin position="416"/>
        <end position="495"/>
    </location>
</feature>
<feature type="compositionally biased region" description="Basic and acidic residues" evidence="3">
    <location>
        <begin position="1"/>
        <end position="19"/>
    </location>
</feature>
<feature type="compositionally biased region" description="Basic and acidic residues" evidence="3">
    <location>
        <begin position="29"/>
        <end position="138"/>
    </location>
</feature>
<feature type="compositionally biased region" description="Basic and acidic residues" evidence="3">
    <location>
        <begin position="146"/>
        <end position="260"/>
    </location>
</feature>
<feature type="compositionally biased region" description="Basic and acidic residues" evidence="3">
    <location>
        <begin position="268"/>
        <end position="300"/>
    </location>
</feature>
<feature type="compositionally biased region" description="Acidic residues" evidence="3">
    <location>
        <begin position="318"/>
        <end position="338"/>
    </location>
</feature>
<feature type="compositionally biased region" description="Basic and acidic residues" evidence="3">
    <location>
        <begin position="339"/>
        <end position="350"/>
    </location>
</feature>
<feature type="modified residue" description="Phosphoserine" evidence="1">
    <location>
        <position position="250"/>
    </location>
</feature>
<feature type="sequence conflict" description="In Ref. 1; BAE25723." evidence="4" ref="1">
    <original>Q</original>
    <variation>H</variation>
    <location>
        <position position="732"/>
    </location>
</feature>
<feature type="sequence conflict" description="In Ref. 1; BAE25723." evidence="4" ref="1">
    <original>P</original>
    <variation>S</variation>
    <location>
        <position position="760"/>
    </location>
</feature>
<accession>Q8C761</accession>
<accession>Q3UNM4</accession>
<reference key="1">
    <citation type="journal article" date="2005" name="Science">
        <title>The transcriptional landscape of the mammalian genome.</title>
        <authorList>
            <person name="Carninci P."/>
            <person name="Kasukawa T."/>
            <person name="Katayama S."/>
            <person name="Gough J."/>
            <person name="Frith M.C."/>
            <person name="Maeda N."/>
            <person name="Oyama R."/>
            <person name="Ravasi T."/>
            <person name="Lenhard B."/>
            <person name="Wells C."/>
            <person name="Kodzius R."/>
            <person name="Shimokawa K."/>
            <person name="Bajic V.B."/>
            <person name="Brenner S.E."/>
            <person name="Batalov S."/>
            <person name="Forrest A.R."/>
            <person name="Zavolan M."/>
            <person name="Davis M.J."/>
            <person name="Wilming L.G."/>
            <person name="Aidinis V."/>
            <person name="Allen J.E."/>
            <person name="Ambesi-Impiombato A."/>
            <person name="Apweiler R."/>
            <person name="Aturaliya R.N."/>
            <person name="Bailey T.L."/>
            <person name="Bansal M."/>
            <person name="Baxter L."/>
            <person name="Beisel K.W."/>
            <person name="Bersano T."/>
            <person name="Bono H."/>
            <person name="Chalk A.M."/>
            <person name="Chiu K.P."/>
            <person name="Choudhary V."/>
            <person name="Christoffels A."/>
            <person name="Clutterbuck D.R."/>
            <person name="Crowe M.L."/>
            <person name="Dalla E."/>
            <person name="Dalrymple B.P."/>
            <person name="de Bono B."/>
            <person name="Della Gatta G."/>
            <person name="di Bernardo D."/>
            <person name="Down T."/>
            <person name="Engstrom P."/>
            <person name="Fagiolini M."/>
            <person name="Faulkner G."/>
            <person name="Fletcher C.F."/>
            <person name="Fukushima T."/>
            <person name="Furuno M."/>
            <person name="Futaki S."/>
            <person name="Gariboldi M."/>
            <person name="Georgii-Hemming P."/>
            <person name="Gingeras T.R."/>
            <person name="Gojobori T."/>
            <person name="Green R.E."/>
            <person name="Gustincich S."/>
            <person name="Harbers M."/>
            <person name="Hayashi Y."/>
            <person name="Hensch T.K."/>
            <person name="Hirokawa N."/>
            <person name="Hill D."/>
            <person name="Huminiecki L."/>
            <person name="Iacono M."/>
            <person name="Ikeo K."/>
            <person name="Iwama A."/>
            <person name="Ishikawa T."/>
            <person name="Jakt M."/>
            <person name="Kanapin A."/>
            <person name="Katoh M."/>
            <person name="Kawasawa Y."/>
            <person name="Kelso J."/>
            <person name="Kitamura H."/>
            <person name="Kitano H."/>
            <person name="Kollias G."/>
            <person name="Krishnan S.P."/>
            <person name="Kruger A."/>
            <person name="Kummerfeld S.K."/>
            <person name="Kurochkin I.V."/>
            <person name="Lareau L.F."/>
            <person name="Lazarevic D."/>
            <person name="Lipovich L."/>
            <person name="Liu J."/>
            <person name="Liuni S."/>
            <person name="McWilliam S."/>
            <person name="Madan Babu M."/>
            <person name="Madera M."/>
            <person name="Marchionni L."/>
            <person name="Matsuda H."/>
            <person name="Matsuzawa S."/>
            <person name="Miki H."/>
            <person name="Mignone F."/>
            <person name="Miyake S."/>
            <person name="Morris K."/>
            <person name="Mottagui-Tabar S."/>
            <person name="Mulder N."/>
            <person name="Nakano N."/>
            <person name="Nakauchi H."/>
            <person name="Ng P."/>
            <person name="Nilsson R."/>
            <person name="Nishiguchi S."/>
            <person name="Nishikawa S."/>
            <person name="Nori F."/>
            <person name="Ohara O."/>
            <person name="Okazaki Y."/>
            <person name="Orlando V."/>
            <person name="Pang K.C."/>
            <person name="Pavan W.J."/>
            <person name="Pavesi G."/>
            <person name="Pesole G."/>
            <person name="Petrovsky N."/>
            <person name="Piazza S."/>
            <person name="Reed J."/>
            <person name="Reid J.F."/>
            <person name="Ring B.Z."/>
            <person name="Ringwald M."/>
            <person name="Rost B."/>
            <person name="Ruan Y."/>
            <person name="Salzberg S.L."/>
            <person name="Sandelin A."/>
            <person name="Schneider C."/>
            <person name="Schoenbach C."/>
            <person name="Sekiguchi K."/>
            <person name="Semple C.A."/>
            <person name="Seno S."/>
            <person name="Sessa L."/>
            <person name="Sheng Y."/>
            <person name="Shibata Y."/>
            <person name="Shimada H."/>
            <person name="Shimada K."/>
            <person name="Silva D."/>
            <person name="Sinclair B."/>
            <person name="Sperling S."/>
            <person name="Stupka E."/>
            <person name="Sugiura K."/>
            <person name="Sultana R."/>
            <person name="Takenaka Y."/>
            <person name="Taki K."/>
            <person name="Tammoja K."/>
            <person name="Tan S.L."/>
            <person name="Tang S."/>
            <person name="Taylor M.S."/>
            <person name="Tegner J."/>
            <person name="Teichmann S.A."/>
            <person name="Ueda H.R."/>
            <person name="van Nimwegen E."/>
            <person name="Verardo R."/>
            <person name="Wei C.L."/>
            <person name="Yagi K."/>
            <person name="Yamanishi H."/>
            <person name="Zabarovsky E."/>
            <person name="Zhu S."/>
            <person name="Zimmer A."/>
            <person name="Hide W."/>
            <person name="Bult C."/>
            <person name="Grimmond S.M."/>
            <person name="Teasdale R.D."/>
            <person name="Liu E.T."/>
            <person name="Brusic V."/>
            <person name="Quackenbush J."/>
            <person name="Wahlestedt C."/>
            <person name="Mattick J.S."/>
            <person name="Hume D.A."/>
            <person name="Kai C."/>
            <person name="Sasaki D."/>
            <person name="Tomaru Y."/>
            <person name="Fukuda S."/>
            <person name="Kanamori-Katayama M."/>
            <person name="Suzuki M."/>
            <person name="Aoki J."/>
            <person name="Arakawa T."/>
            <person name="Iida J."/>
            <person name="Imamura K."/>
            <person name="Itoh M."/>
            <person name="Kato T."/>
            <person name="Kawaji H."/>
            <person name="Kawagashira N."/>
            <person name="Kawashima T."/>
            <person name="Kojima M."/>
            <person name="Kondo S."/>
            <person name="Konno H."/>
            <person name="Nakano K."/>
            <person name="Ninomiya N."/>
            <person name="Nishio T."/>
            <person name="Okada M."/>
            <person name="Plessy C."/>
            <person name="Shibata K."/>
            <person name="Shiraki T."/>
            <person name="Suzuki S."/>
            <person name="Tagami M."/>
            <person name="Waki K."/>
            <person name="Watahiki A."/>
            <person name="Okamura-Oho Y."/>
            <person name="Suzuki H."/>
            <person name="Kawai J."/>
            <person name="Hayashizaki Y."/>
        </authorList>
    </citation>
    <scope>NUCLEOTIDE SEQUENCE [LARGE SCALE MRNA]</scope>
    <source>
        <strain>C57BL/6J</strain>
        <tissue>Kidney</tissue>
        <tissue>Lung</tissue>
    </source>
</reference>
<reference key="2">
    <citation type="journal article" date="2010" name="Cell">
        <title>A tissue-specific atlas of mouse protein phosphorylation and expression.</title>
        <authorList>
            <person name="Huttlin E.L."/>
            <person name="Jedrychowski M.P."/>
            <person name="Elias J.E."/>
            <person name="Goswami T."/>
            <person name="Rad R."/>
            <person name="Beausoleil S.A."/>
            <person name="Villen J."/>
            <person name="Haas W."/>
            <person name="Sowa M.E."/>
            <person name="Gygi S.P."/>
        </authorList>
    </citation>
    <scope>IDENTIFICATION BY MASS SPECTROMETRY [LARGE SCALE ANALYSIS]</scope>
    <source>
        <tissue>Testis</tissue>
    </source>
</reference>
<name>DC2I1_MOUSE</name>
<keyword id="KW-0966">Cell projection</keyword>
<keyword id="KW-0969">Cilium</keyword>
<keyword id="KW-0970">Cilium biogenesis/degradation</keyword>
<keyword id="KW-0963">Cytoplasm</keyword>
<keyword id="KW-0206">Cytoskeleton</keyword>
<keyword id="KW-0597">Phosphoprotein</keyword>
<keyword id="KW-1185">Reference proteome</keyword>
<keyword id="KW-0677">Repeat</keyword>
<keyword id="KW-0853">WD repeat</keyword>
<sequence>MEPGKRRTKDDTWKADDLRKHLKVQSGSPKEEKKLREKKAHKDSESAAPEYREHKSRDPDREARHKEKTAERDLYTSTEHPRGERDRERHKERRKDAKDREKDKLKERHRDQEAEKAHSRGKDREREKDRRARKEEIRQSMAYHDLLSRDMRGRQMAEKVEKKASKIRTEERERRDEDSERIDEDRERRYRERKLQYGDSKEHPLSYWLYKEDGEKKHRKAKDADREKRLREKSSMREKRERHAREKGSSLSDREVEDRHREKRHKEGLHYDDERRRSHADKKERSSKEEHKKRELKELEKEDNDLEATGPDEYLPNLEDDFVDYEDDFEVCDGDDDSNNEHEAREKAEELPLAQKREIQEIQKAISAENERVGELSLKMFQKQGWTEYTKEPWTDANDSPSRTPVCGIFVDFATASHRQKSRSQALKQKTRSSKLLRLIDLDFSFTFSLLDLPPVNEYDMYIRNFGKKNTKQAYVQYNEDNVERDIQTEDIETREVWTQHPGEGTAVSGGSEEKDFSDVTVVPKIDTPRLANFLRAACQVVAVLLEEDRLAAGPSWIPRAQDKALNISDSSSQLNTSLPFLQSRKVSCLHASRVQRQTVVSVHDLPEKAFAPSLDSRHLLCVWDIWQPSGPQKVLICESKVTCCCFSPLKAFLLFAGTVHGSVVVWDLREDSRIHHYVRLSNCFWAFRTPTFSTDGILTSVNHRSPLQAIEPVATSAYKKQSFVLSPFSTQEEMAGLSFHIASLDETGVLNVWVVVELPKADISGSMSDLGLIPGGRIKLVHSTVIQLGNSLSHKDSELWGSTQTLSVKFLPSDPNHFVVGTDMGLISHSTRQDWRVSPRVFKPEQHGVRPIKVNVIDFSPFEETVFLAGCSDGSIRLHQLTSERPIMQWDNSTSGHAVTSLQWSPTRPAVFLVQDDASRIYVWDLLENDLGPVAQQPISPDKLVAMTIVGEPEKTSGSFVALVLARTSGTVDVQNLKRRWTTPAVDEHSQLRLLLQK</sequence>
<proteinExistence type="evidence at protein level"/>
<protein>
    <recommendedName>
        <fullName>Cytoplasmic dynein 2 intermediate chain 1</fullName>
    </recommendedName>
    <alternativeName>
        <fullName>Dynein 2 intermediate chain 1</fullName>
    </alternativeName>
    <alternativeName>
        <fullName>WD repeat-containing protein 60</fullName>
    </alternativeName>
</protein>
<gene>
    <name type="primary">Dync2i1</name>
    <name type="synonym">Wdr60</name>
</gene>